<keyword id="KW-0067">ATP-binding</keyword>
<keyword id="KW-0963">Cytoplasm</keyword>
<keyword id="KW-0418">Kinase</keyword>
<keyword id="KW-0547">Nucleotide-binding</keyword>
<keyword id="KW-0808">Transferase</keyword>
<feature type="chain" id="PRO_1000017860" description="Uridine kinase">
    <location>
        <begin position="1"/>
        <end position="211"/>
    </location>
</feature>
<feature type="binding site" evidence="1">
    <location>
        <begin position="12"/>
        <end position="19"/>
    </location>
    <ligand>
        <name>ATP</name>
        <dbReference type="ChEBI" id="CHEBI:30616"/>
    </ligand>
</feature>
<evidence type="ECO:0000255" key="1">
    <source>
        <dbReference type="HAMAP-Rule" id="MF_00551"/>
    </source>
</evidence>
<name>URK_BACVZ</name>
<gene>
    <name evidence="1" type="primary">udk</name>
    <name type="ordered locus">RBAM_024430</name>
</gene>
<sequence>MGKSPVVIGIAGGSGSGKTSVTRSIYEQFKGHSILMIQQDLYYKDQSHLPFEERLNTNYDHPLAFDNDYLIEHIQELLNYRPIEKPIYDYKLHTRSEETIPVEPKDVIILEGILVLEDKRLRDLMDMKLYVDTDADLRIIRRIMRDINERGRSIDSVIEQYVSVVRPMHNQFVEPTKRYADIIIPEGGQNHVAIDLMVTKIQTILEQNAIL</sequence>
<dbReference type="EC" id="2.7.1.48" evidence="1"/>
<dbReference type="EMBL" id="CP000560">
    <property type="protein sequence ID" value="ABS74803.1"/>
    <property type="molecule type" value="Genomic_DNA"/>
</dbReference>
<dbReference type="RefSeq" id="WP_003152763.1">
    <property type="nucleotide sequence ID" value="NC_009725.2"/>
</dbReference>
<dbReference type="SMR" id="A7Z727"/>
<dbReference type="GeneID" id="93081583"/>
<dbReference type="KEGG" id="bay:RBAM_024430"/>
<dbReference type="HOGENOM" id="CLU_021278_1_2_9"/>
<dbReference type="UniPathway" id="UPA00574">
    <property type="reaction ID" value="UER00637"/>
</dbReference>
<dbReference type="UniPathway" id="UPA00579">
    <property type="reaction ID" value="UER00640"/>
</dbReference>
<dbReference type="Proteomes" id="UP000001120">
    <property type="component" value="Chromosome"/>
</dbReference>
<dbReference type="GO" id="GO:0005737">
    <property type="term" value="C:cytoplasm"/>
    <property type="evidence" value="ECO:0007669"/>
    <property type="project" value="UniProtKB-SubCell"/>
</dbReference>
<dbReference type="GO" id="GO:0005524">
    <property type="term" value="F:ATP binding"/>
    <property type="evidence" value="ECO:0007669"/>
    <property type="project" value="UniProtKB-UniRule"/>
</dbReference>
<dbReference type="GO" id="GO:0043771">
    <property type="term" value="F:cytidine kinase activity"/>
    <property type="evidence" value="ECO:0007669"/>
    <property type="project" value="RHEA"/>
</dbReference>
<dbReference type="GO" id="GO:0004849">
    <property type="term" value="F:uridine kinase activity"/>
    <property type="evidence" value="ECO:0007669"/>
    <property type="project" value="UniProtKB-UniRule"/>
</dbReference>
<dbReference type="GO" id="GO:0044211">
    <property type="term" value="P:CTP salvage"/>
    <property type="evidence" value="ECO:0007669"/>
    <property type="project" value="UniProtKB-UniRule"/>
</dbReference>
<dbReference type="GO" id="GO:0044206">
    <property type="term" value="P:UMP salvage"/>
    <property type="evidence" value="ECO:0007669"/>
    <property type="project" value="UniProtKB-UniRule"/>
</dbReference>
<dbReference type="CDD" id="cd02023">
    <property type="entry name" value="UMPK"/>
    <property type="match status" value="1"/>
</dbReference>
<dbReference type="Gene3D" id="3.40.50.300">
    <property type="entry name" value="P-loop containing nucleotide triphosphate hydrolases"/>
    <property type="match status" value="1"/>
</dbReference>
<dbReference type="HAMAP" id="MF_00551">
    <property type="entry name" value="Uridine_kinase"/>
    <property type="match status" value="1"/>
</dbReference>
<dbReference type="InterPro" id="IPR027417">
    <property type="entry name" value="P-loop_NTPase"/>
</dbReference>
<dbReference type="InterPro" id="IPR006083">
    <property type="entry name" value="PRK/URK"/>
</dbReference>
<dbReference type="InterPro" id="IPR026008">
    <property type="entry name" value="Uridine_kinase"/>
</dbReference>
<dbReference type="InterPro" id="IPR000764">
    <property type="entry name" value="Uridine_kinase-like"/>
</dbReference>
<dbReference type="NCBIfam" id="NF004018">
    <property type="entry name" value="PRK05480.1"/>
    <property type="match status" value="1"/>
</dbReference>
<dbReference type="NCBIfam" id="TIGR00235">
    <property type="entry name" value="udk"/>
    <property type="match status" value="1"/>
</dbReference>
<dbReference type="PANTHER" id="PTHR10285">
    <property type="entry name" value="URIDINE KINASE"/>
    <property type="match status" value="1"/>
</dbReference>
<dbReference type="Pfam" id="PF00485">
    <property type="entry name" value="PRK"/>
    <property type="match status" value="1"/>
</dbReference>
<dbReference type="PRINTS" id="PR00988">
    <property type="entry name" value="URIDINKINASE"/>
</dbReference>
<dbReference type="SUPFAM" id="SSF52540">
    <property type="entry name" value="P-loop containing nucleoside triphosphate hydrolases"/>
    <property type="match status" value="1"/>
</dbReference>
<comment type="catalytic activity">
    <reaction evidence="1">
        <text>uridine + ATP = UMP + ADP + H(+)</text>
        <dbReference type="Rhea" id="RHEA:16825"/>
        <dbReference type="ChEBI" id="CHEBI:15378"/>
        <dbReference type="ChEBI" id="CHEBI:16704"/>
        <dbReference type="ChEBI" id="CHEBI:30616"/>
        <dbReference type="ChEBI" id="CHEBI:57865"/>
        <dbReference type="ChEBI" id="CHEBI:456216"/>
        <dbReference type="EC" id="2.7.1.48"/>
    </reaction>
</comment>
<comment type="catalytic activity">
    <reaction evidence="1">
        <text>cytidine + ATP = CMP + ADP + H(+)</text>
        <dbReference type="Rhea" id="RHEA:24674"/>
        <dbReference type="ChEBI" id="CHEBI:15378"/>
        <dbReference type="ChEBI" id="CHEBI:17562"/>
        <dbReference type="ChEBI" id="CHEBI:30616"/>
        <dbReference type="ChEBI" id="CHEBI:60377"/>
        <dbReference type="ChEBI" id="CHEBI:456216"/>
        <dbReference type="EC" id="2.7.1.48"/>
    </reaction>
</comment>
<comment type="pathway">
    <text evidence="1">Pyrimidine metabolism; CTP biosynthesis via salvage pathway; CTP from cytidine: step 1/3.</text>
</comment>
<comment type="pathway">
    <text evidence="1">Pyrimidine metabolism; UMP biosynthesis via salvage pathway; UMP from uridine: step 1/1.</text>
</comment>
<comment type="subcellular location">
    <subcellularLocation>
        <location evidence="1">Cytoplasm</location>
    </subcellularLocation>
</comment>
<comment type="similarity">
    <text evidence="1">Belongs to the uridine kinase family.</text>
</comment>
<accession>A7Z727</accession>
<reference key="1">
    <citation type="journal article" date="2007" name="Nat. Biotechnol.">
        <title>Comparative analysis of the complete genome sequence of the plant growth-promoting bacterium Bacillus amyloliquefaciens FZB42.</title>
        <authorList>
            <person name="Chen X.H."/>
            <person name="Koumoutsi A."/>
            <person name="Scholz R."/>
            <person name="Eisenreich A."/>
            <person name="Schneider K."/>
            <person name="Heinemeyer I."/>
            <person name="Morgenstern B."/>
            <person name="Voss B."/>
            <person name="Hess W.R."/>
            <person name="Reva O."/>
            <person name="Junge H."/>
            <person name="Voigt B."/>
            <person name="Jungblut P.R."/>
            <person name="Vater J."/>
            <person name="Suessmuth R."/>
            <person name="Liesegang H."/>
            <person name="Strittmatter A."/>
            <person name="Gottschalk G."/>
            <person name="Borriss R."/>
        </authorList>
    </citation>
    <scope>NUCLEOTIDE SEQUENCE [LARGE SCALE GENOMIC DNA]</scope>
    <source>
        <strain>DSM 23117 / BGSC 10A6 / LMG 26770 / FZB42</strain>
    </source>
</reference>
<organism>
    <name type="scientific">Bacillus velezensis (strain DSM 23117 / BGSC 10A6 / LMG 26770 / FZB42)</name>
    <name type="common">Bacillus amyloliquefaciens subsp. plantarum</name>
    <dbReference type="NCBI Taxonomy" id="326423"/>
    <lineage>
        <taxon>Bacteria</taxon>
        <taxon>Bacillati</taxon>
        <taxon>Bacillota</taxon>
        <taxon>Bacilli</taxon>
        <taxon>Bacillales</taxon>
        <taxon>Bacillaceae</taxon>
        <taxon>Bacillus</taxon>
        <taxon>Bacillus amyloliquefaciens group</taxon>
    </lineage>
</organism>
<proteinExistence type="inferred from homology"/>
<protein>
    <recommendedName>
        <fullName evidence="1">Uridine kinase</fullName>
        <ecNumber evidence="1">2.7.1.48</ecNumber>
    </recommendedName>
    <alternativeName>
        <fullName evidence="1">Cytidine monophosphokinase</fullName>
    </alternativeName>
    <alternativeName>
        <fullName evidence="1">Uridine monophosphokinase</fullName>
    </alternativeName>
</protein>